<protein>
    <recommendedName>
        <fullName>Nucleolar protein 6</fullName>
    </recommendedName>
    <alternativeName>
        <fullName evidence="8">Nucleolar RNA-associated protein</fullName>
        <shortName evidence="8">Nrap</shortName>
    </alternativeName>
</protein>
<name>NOL6_HUMAN</name>
<feature type="chain" id="PRO_0000215647" description="Nucleolar protein 6">
    <location>
        <begin position="1"/>
        <end position="1146"/>
    </location>
</feature>
<feature type="region of interest" description="Disordered" evidence="3">
    <location>
        <begin position="1"/>
        <end position="48"/>
    </location>
</feature>
<feature type="coiled-coil region" evidence="2">
    <location>
        <begin position="83"/>
        <end position="114"/>
    </location>
</feature>
<feature type="modified residue" description="Phosphoserine" evidence="18">
    <location>
        <position position="56"/>
    </location>
</feature>
<feature type="modified residue" description="Phosphoserine" evidence="18">
    <location>
        <position position="283"/>
    </location>
</feature>
<feature type="modified residue" description="Phosphoserine" evidence="18">
    <location>
        <position position="289"/>
    </location>
</feature>
<feature type="modified residue" description="Phosphoserine" evidence="15 16 17 18">
    <location>
        <position position="811"/>
    </location>
</feature>
<feature type="splice variant" id="VSP_013530" description="In isoform 4." evidence="9">
    <location>
        <begin position="383"/>
        <end position="385"/>
    </location>
</feature>
<feature type="splice variant" id="VSP_013531" description="In isoform 3." evidence="8">
    <location>
        <begin position="651"/>
        <end position="1097"/>
    </location>
</feature>
<feature type="splice variant" id="VSP_013532" description="In isoform 2." evidence="8">
    <original>TVFRPPLDIYDVLIRLSPRHIPRHRQAVDSPAASFCRGLLSQPGPSSLMPVLGYDPPQLYLTQLREAFGDLALFFYDQHGGEVIGVLWKPTSFQPQPFKASSTKGRMVMSRGGELVMVPNVEAILEDFAVLGEGLVQTVEARSERWTV</original>
    <variation>WDPAKMWPF</variation>
    <location>
        <begin position="999"/>
        <end position="1146"/>
    </location>
</feature>
<feature type="sequence variant" id="VAR_053541" description="In dbSNP:rs10971523.">
    <original>P</original>
    <variation>S</variation>
    <location>
        <position position="52"/>
    </location>
</feature>
<feature type="sequence variant" id="VAR_053542" description="In dbSNP:rs35135082.">
    <original>R</original>
    <variation>W</variation>
    <location>
        <position position="723"/>
    </location>
</feature>
<feature type="sequence conflict" description="In Ref. 1; AAL74405." evidence="10" ref="1">
    <original>A</original>
    <variation>T</variation>
    <location>
        <position position="1098"/>
    </location>
</feature>
<keyword id="KW-0002">3D-structure</keyword>
<keyword id="KW-0025">Alternative splicing</keyword>
<keyword id="KW-0158">Chromosome</keyword>
<keyword id="KW-0175">Coiled coil</keyword>
<keyword id="KW-0539">Nucleus</keyword>
<keyword id="KW-0597">Phosphoprotein</keyword>
<keyword id="KW-1267">Proteomics identification</keyword>
<keyword id="KW-1185">Reference proteome</keyword>
<keyword id="KW-0694">RNA-binding</keyword>
<dbReference type="EMBL" id="AF361079">
    <property type="protein sequence ID" value="AAL74403.1"/>
    <property type="molecule type" value="mRNA"/>
</dbReference>
<dbReference type="EMBL" id="AF361080">
    <property type="protein sequence ID" value="AAL74404.1"/>
    <property type="molecule type" value="mRNA"/>
</dbReference>
<dbReference type="EMBL" id="AF361081">
    <property type="protein sequence ID" value="AAL74405.1"/>
    <property type="molecule type" value="mRNA"/>
</dbReference>
<dbReference type="EMBL" id="AL356218">
    <property type="status" value="NOT_ANNOTATED_CDS"/>
    <property type="molecule type" value="Genomic_DNA"/>
</dbReference>
<dbReference type="EMBL" id="BC008298">
    <property type="protein sequence ID" value="AAH08298.1"/>
    <property type="status" value="ALT_INIT"/>
    <property type="molecule type" value="mRNA"/>
</dbReference>
<dbReference type="EMBL" id="BC008852">
    <property type="protein sequence ID" value="AAH08852.2"/>
    <property type="molecule type" value="mRNA"/>
</dbReference>
<dbReference type="EMBL" id="BC030139">
    <property type="protein sequence ID" value="AAH30139.1"/>
    <property type="molecule type" value="mRNA"/>
</dbReference>
<dbReference type="EMBL" id="AK025612">
    <property type="protein sequence ID" value="BAB15189.1"/>
    <property type="status" value="ALT_INIT"/>
    <property type="molecule type" value="mRNA"/>
</dbReference>
<dbReference type="EMBL" id="AK026193">
    <property type="protein sequence ID" value="BAB15389.1"/>
    <property type="status" value="ALT_SEQ"/>
    <property type="molecule type" value="mRNA"/>
</dbReference>
<dbReference type="CCDS" id="CCDS6543.1">
    <molecule id="Q9H6R4-1"/>
</dbReference>
<dbReference type="CCDS" id="CCDS6544.1">
    <molecule id="Q9H6R4-3"/>
</dbReference>
<dbReference type="RefSeq" id="NP_075068.2">
    <molecule id="Q9H6R4-1"/>
    <property type="nucleotide sequence ID" value="NM_022917.4"/>
</dbReference>
<dbReference type="RefSeq" id="NP_631981.2">
    <molecule id="Q9H6R4-3"/>
    <property type="nucleotide sequence ID" value="NM_139235.3"/>
</dbReference>
<dbReference type="PDB" id="7MQ8">
    <property type="method" value="EM"/>
    <property type="resolution" value="3.60 A"/>
    <property type="chains" value="NH=1-1146"/>
</dbReference>
<dbReference type="PDB" id="7MQ9">
    <property type="method" value="EM"/>
    <property type="resolution" value="3.87 A"/>
    <property type="chains" value="NH=1-1146"/>
</dbReference>
<dbReference type="PDB" id="7MQA">
    <property type="method" value="EM"/>
    <property type="resolution" value="2.70 A"/>
    <property type="chains" value="NH=1-1146"/>
</dbReference>
<dbReference type="PDBsum" id="7MQ8"/>
<dbReference type="PDBsum" id="7MQ9"/>
<dbReference type="PDBsum" id="7MQA"/>
<dbReference type="EMDB" id="EMD-23936"/>
<dbReference type="EMDB" id="EMD-23937"/>
<dbReference type="EMDB" id="EMD-23938"/>
<dbReference type="SMR" id="Q9H6R4"/>
<dbReference type="BioGRID" id="122391">
    <property type="interactions" value="232"/>
</dbReference>
<dbReference type="ComplexPortal" id="CPX-2511">
    <property type="entry name" value="Small ribosomal subunit processome"/>
</dbReference>
<dbReference type="FunCoup" id="Q9H6R4">
    <property type="interactions" value="2817"/>
</dbReference>
<dbReference type="IntAct" id="Q9H6R4">
    <property type="interactions" value="99"/>
</dbReference>
<dbReference type="MINT" id="Q9H6R4"/>
<dbReference type="STRING" id="9606.ENSP00000297990"/>
<dbReference type="GlyGen" id="Q9H6R4">
    <property type="glycosylation" value="3 sites, 1 O-linked glycan (1 site)"/>
</dbReference>
<dbReference type="iPTMnet" id="Q9H6R4"/>
<dbReference type="MetOSite" id="Q9H6R4"/>
<dbReference type="PhosphoSitePlus" id="Q9H6R4"/>
<dbReference type="SwissPalm" id="Q9H6R4"/>
<dbReference type="BioMuta" id="NOL6"/>
<dbReference type="DMDM" id="62900709"/>
<dbReference type="jPOST" id="Q9H6R4"/>
<dbReference type="MassIVE" id="Q9H6R4"/>
<dbReference type="PaxDb" id="9606-ENSP00000297990"/>
<dbReference type="PeptideAtlas" id="Q9H6R4"/>
<dbReference type="ProteomicsDB" id="81016">
    <molecule id="Q9H6R4-1"/>
</dbReference>
<dbReference type="ProteomicsDB" id="81017">
    <molecule id="Q9H6R4-2"/>
</dbReference>
<dbReference type="ProteomicsDB" id="81018">
    <molecule id="Q9H6R4-3"/>
</dbReference>
<dbReference type="ProteomicsDB" id="81019">
    <molecule id="Q9H6R4-4"/>
</dbReference>
<dbReference type="Pumba" id="Q9H6R4"/>
<dbReference type="Antibodypedia" id="25265">
    <property type="antibodies" value="119 antibodies from 22 providers"/>
</dbReference>
<dbReference type="DNASU" id="65083"/>
<dbReference type="Ensembl" id="ENST00000297990.9">
    <molecule id="Q9H6R4-1"/>
    <property type="protein sequence ID" value="ENSP00000297990.4"/>
    <property type="gene ID" value="ENSG00000165271.17"/>
</dbReference>
<dbReference type="Ensembl" id="ENST00000353159.6">
    <molecule id="Q9H6R4-3"/>
    <property type="protein sequence ID" value="ENSP00000313978.4"/>
    <property type="gene ID" value="ENSG00000165271.17"/>
</dbReference>
<dbReference type="GeneID" id="65083"/>
<dbReference type="KEGG" id="hsa:65083"/>
<dbReference type="MANE-Select" id="ENST00000297990.9">
    <property type="protein sequence ID" value="ENSP00000297990.4"/>
    <property type="RefSeq nucleotide sequence ID" value="NM_022917.5"/>
    <property type="RefSeq protein sequence ID" value="NP_075068.2"/>
</dbReference>
<dbReference type="UCSC" id="uc003zsy.4">
    <molecule id="Q9H6R4-1"/>
    <property type="organism name" value="human"/>
</dbReference>
<dbReference type="AGR" id="HGNC:19910"/>
<dbReference type="CTD" id="65083"/>
<dbReference type="DisGeNET" id="65083"/>
<dbReference type="GeneCards" id="NOL6"/>
<dbReference type="HGNC" id="HGNC:19910">
    <property type="gene designation" value="NOL6"/>
</dbReference>
<dbReference type="HPA" id="ENSG00000165271">
    <property type="expression patterns" value="Low tissue specificity"/>
</dbReference>
<dbReference type="MIM" id="611532">
    <property type="type" value="gene"/>
</dbReference>
<dbReference type="neXtProt" id="NX_Q9H6R4"/>
<dbReference type="OpenTargets" id="ENSG00000165271"/>
<dbReference type="PharmGKB" id="PA134979388"/>
<dbReference type="VEuPathDB" id="HostDB:ENSG00000165271"/>
<dbReference type="eggNOG" id="KOG2054">
    <property type="taxonomic scope" value="Eukaryota"/>
</dbReference>
<dbReference type="GeneTree" id="ENSGT00390000018619"/>
<dbReference type="HOGENOM" id="CLU_394292_0_0_1"/>
<dbReference type="InParanoid" id="Q9H6R4"/>
<dbReference type="OMA" id="NPHGGKE"/>
<dbReference type="OrthoDB" id="10251401at2759"/>
<dbReference type="PAN-GO" id="Q9H6R4">
    <property type="GO annotations" value="5 GO annotations based on evolutionary models"/>
</dbReference>
<dbReference type="PhylomeDB" id="Q9H6R4"/>
<dbReference type="PathwayCommons" id="Q9H6R4"/>
<dbReference type="Reactome" id="R-HSA-6790901">
    <property type="pathway name" value="rRNA modification in the nucleus and cytosol"/>
</dbReference>
<dbReference type="Reactome" id="R-HSA-6791226">
    <property type="pathway name" value="Major pathway of rRNA processing in the nucleolus and cytosol"/>
</dbReference>
<dbReference type="SignaLink" id="Q9H6R4"/>
<dbReference type="BioGRID-ORCS" id="65083">
    <property type="hits" value="791 hits in 1140 CRISPR screens"/>
</dbReference>
<dbReference type="CD-CODE" id="232F8A39">
    <property type="entry name" value="P-body"/>
</dbReference>
<dbReference type="CD-CODE" id="91857CE7">
    <property type="entry name" value="Nucleolus"/>
</dbReference>
<dbReference type="ChiTaRS" id="NOL6">
    <property type="organism name" value="human"/>
</dbReference>
<dbReference type="GeneWiki" id="NOL6"/>
<dbReference type="GenomeRNAi" id="65083"/>
<dbReference type="Pharos" id="Q9H6R4">
    <property type="development level" value="Tbio"/>
</dbReference>
<dbReference type="PRO" id="PR:Q9H6R4"/>
<dbReference type="Proteomes" id="UP000005640">
    <property type="component" value="Chromosome 9"/>
</dbReference>
<dbReference type="RNAct" id="Q9H6R4">
    <property type="molecule type" value="protein"/>
</dbReference>
<dbReference type="Bgee" id="ENSG00000165271">
    <property type="expression patterns" value="Expressed in tongue squamous epithelium and 190 other cell types or tissues"/>
</dbReference>
<dbReference type="ExpressionAtlas" id="Q9H6R4">
    <property type="expression patterns" value="baseline and differential"/>
</dbReference>
<dbReference type="GO" id="GO:0000794">
    <property type="term" value="C:condensed nuclear chromosome"/>
    <property type="evidence" value="ECO:0000250"/>
    <property type="project" value="UniProtKB"/>
</dbReference>
<dbReference type="GO" id="GO:0032545">
    <property type="term" value="C:CURI complex"/>
    <property type="evidence" value="ECO:0000318"/>
    <property type="project" value="GO_Central"/>
</dbReference>
<dbReference type="GO" id="GO:0005739">
    <property type="term" value="C:mitochondrion"/>
    <property type="evidence" value="ECO:0000314"/>
    <property type="project" value="HPA"/>
</dbReference>
<dbReference type="GO" id="GO:0005730">
    <property type="term" value="C:nucleolus"/>
    <property type="evidence" value="ECO:0000314"/>
    <property type="project" value="HPA"/>
</dbReference>
<dbReference type="GO" id="GO:0005654">
    <property type="term" value="C:nucleoplasm"/>
    <property type="evidence" value="ECO:0000314"/>
    <property type="project" value="HPA"/>
</dbReference>
<dbReference type="GO" id="GO:0032040">
    <property type="term" value="C:small-subunit processome"/>
    <property type="evidence" value="ECO:0000314"/>
    <property type="project" value="UniProtKB"/>
</dbReference>
<dbReference type="GO" id="GO:0034456">
    <property type="term" value="C:UTP-C complex"/>
    <property type="evidence" value="ECO:0000318"/>
    <property type="project" value="GO_Central"/>
</dbReference>
<dbReference type="GO" id="GO:0003723">
    <property type="term" value="F:RNA binding"/>
    <property type="evidence" value="ECO:0007005"/>
    <property type="project" value="UniProtKB"/>
</dbReference>
<dbReference type="GO" id="GO:0042274">
    <property type="term" value="P:ribosomal small subunit biogenesis"/>
    <property type="evidence" value="ECO:0000314"/>
    <property type="project" value="UniProtKB"/>
</dbReference>
<dbReference type="GO" id="GO:0006364">
    <property type="term" value="P:rRNA processing"/>
    <property type="evidence" value="ECO:0000250"/>
    <property type="project" value="UniProtKB"/>
</dbReference>
<dbReference type="GO" id="GO:0006409">
    <property type="term" value="P:tRNA export from nucleus"/>
    <property type="evidence" value="ECO:0000318"/>
    <property type="project" value="GO_Central"/>
</dbReference>
<dbReference type="FunFam" id="1.10.1410.10:FF:000005">
    <property type="entry name" value="Nucleolar protein 6"/>
    <property type="match status" value="1"/>
</dbReference>
<dbReference type="FunFam" id="1.10.1410.10:FF:000006">
    <property type="entry name" value="Nucleolar protein 6"/>
    <property type="match status" value="1"/>
</dbReference>
<dbReference type="FunFam" id="3.30.70.3030:FF:000001">
    <property type="entry name" value="Nucleolar protein 6"/>
    <property type="match status" value="1"/>
</dbReference>
<dbReference type="Gene3D" id="1.10.1410.10">
    <property type="match status" value="2"/>
</dbReference>
<dbReference type="Gene3D" id="3.30.70.3030">
    <property type="match status" value="1"/>
</dbReference>
<dbReference type="InterPro" id="IPR005554">
    <property type="entry name" value="NOL6/Upt22"/>
</dbReference>
<dbReference type="InterPro" id="IPR035082">
    <property type="entry name" value="Nrap_D1"/>
</dbReference>
<dbReference type="InterPro" id="IPR035367">
    <property type="entry name" value="Nrap_D2"/>
</dbReference>
<dbReference type="InterPro" id="IPR035368">
    <property type="entry name" value="Nrap_D3"/>
</dbReference>
<dbReference type="InterPro" id="IPR035369">
    <property type="entry name" value="Nrap_D4"/>
</dbReference>
<dbReference type="InterPro" id="IPR035370">
    <property type="entry name" value="Nrap_D5"/>
</dbReference>
<dbReference type="InterPro" id="IPR035371">
    <property type="entry name" value="Nrap_D6"/>
</dbReference>
<dbReference type="PANTHER" id="PTHR17972:SF0">
    <property type="entry name" value="NUCLEOLAR PROTEIN 6"/>
    <property type="match status" value="1"/>
</dbReference>
<dbReference type="PANTHER" id="PTHR17972">
    <property type="entry name" value="NUCLEOLAR RNA-ASSOCIATED PROTEIN"/>
    <property type="match status" value="1"/>
</dbReference>
<dbReference type="Pfam" id="PF03813">
    <property type="entry name" value="Nrap"/>
    <property type="match status" value="1"/>
</dbReference>
<dbReference type="Pfam" id="PF17403">
    <property type="entry name" value="Nrap_D2"/>
    <property type="match status" value="1"/>
</dbReference>
<dbReference type="Pfam" id="PF17404">
    <property type="entry name" value="Nrap_D3"/>
    <property type="match status" value="1"/>
</dbReference>
<dbReference type="Pfam" id="PF17405">
    <property type="entry name" value="Nrap_D4"/>
    <property type="match status" value="1"/>
</dbReference>
<dbReference type="Pfam" id="PF17406">
    <property type="entry name" value="Nrap_D5"/>
    <property type="match status" value="1"/>
</dbReference>
<dbReference type="Pfam" id="PF17407">
    <property type="entry name" value="Nrap_D6"/>
    <property type="match status" value="1"/>
</dbReference>
<proteinExistence type="evidence at protein level"/>
<evidence type="ECO:0000250" key="1">
    <source>
        <dbReference type="UniProtKB" id="Q8R5K4"/>
    </source>
</evidence>
<evidence type="ECO:0000255" key="2"/>
<evidence type="ECO:0000256" key="3">
    <source>
        <dbReference type="SAM" id="MobiDB-lite"/>
    </source>
</evidence>
<evidence type="ECO:0000269" key="4">
    <source>
    </source>
</evidence>
<evidence type="ECO:0000269" key="5">
    <source>
    </source>
</evidence>
<evidence type="ECO:0000269" key="6">
    <source>
    </source>
</evidence>
<evidence type="ECO:0000269" key="7">
    <source>
    </source>
</evidence>
<evidence type="ECO:0000303" key="8">
    <source>
    </source>
</evidence>
<evidence type="ECO:0000303" key="9">
    <source>
    </source>
</evidence>
<evidence type="ECO:0000305" key="10"/>
<evidence type="ECO:0000312" key="11">
    <source>
        <dbReference type="HGNC" id="HGNC:19910"/>
    </source>
</evidence>
<evidence type="ECO:0007744" key="12">
    <source>
        <dbReference type="PDB" id="7MQ8"/>
    </source>
</evidence>
<evidence type="ECO:0007744" key="13">
    <source>
        <dbReference type="PDB" id="7MQ9"/>
    </source>
</evidence>
<evidence type="ECO:0007744" key="14">
    <source>
        <dbReference type="PDB" id="7MQA"/>
    </source>
</evidence>
<evidence type="ECO:0007744" key="15">
    <source>
    </source>
</evidence>
<evidence type="ECO:0007744" key="16">
    <source>
    </source>
</evidence>
<evidence type="ECO:0007744" key="17">
    <source>
    </source>
</evidence>
<evidence type="ECO:0007744" key="18">
    <source>
    </source>
</evidence>
<gene>
    <name evidence="11" type="primary">NOL6</name>
</gene>
<reference key="1">
    <citation type="journal article" date="2002" name="Genes Cells">
        <title>Isolation and characterization of a new nucleolar protein, Nrap, that is conserved from yeast to humans.</title>
        <authorList>
            <person name="Utama B."/>
            <person name="Kennedy D."/>
            <person name="Ru K."/>
            <person name="Mattick J.S."/>
        </authorList>
    </citation>
    <scope>NUCLEOTIDE SEQUENCE [MRNA] (ISOFORMS 1; 2 AND 3)</scope>
    <scope>FUNCTION</scope>
</reference>
<reference key="2">
    <citation type="journal article" date="2004" name="Nature">
        <title>DNA sequence and analysis of human chromosome 9.</title>
        <authorList>
            <person name="Humphray S.J."/>
            <person name="Oliver K."/>
            <person name="Hunt A.R."/>
            <person name="Plumb R.W."/>
            <person name="Loveland J.E."/>
            <person name="Howe K.L."/>
            <person name="Andrews T.D."/>
            <person name="Searle S."/>
            <person name="Hunt S.E."/>
            <person name="Scott C.E."/>
            <person name="Jones M.C."/>
            <person name="Ainscough R."/>
            <person name="Almeida J.P."/>
            <person name="Ambrose K.D."/>
            <person name="Ashwell R.I.S."/>
            <person name="Babbage A.K."/>
            <person name="Babbage S."/>
            <person name="Bagguley C.L."/>
            <person name="Bailey J."/>
            <person name="Banerjee R."/>
            <person name="Barker D.J."/>
            <person name="Barlow K.F."/>
            <person name="Bates K."/>
            <person name="Beasley H."/>
            <person name="Beasley O."/>
            <person name="Bird C.P."/>
            <person name="Bray-Allen S."/>
            <person name="Brown A.J."/>
            <person name="Brown J.Y."/>
            <person name="Burford D."/>
            <person name="Burrill W."/>
            <person name="Burton J."/>
            <person name="Carder C."/>
            <person name="Carter N.P."/>
            <person name="Chapman J.C."/>
            <person name="Chen Y."/>
            <person name="Clarke G."/>
            <person name="Clark S.Y."/>
            <person name="Clee C.M."/>
            <person name="Clegg S."/>
            <person name="Collier R.E."/>
            <person name="Corby N."/>
            <person name="Crosier M."/>
            <person name="Cummings A.T."/>
            <person name="Davies J."/>
            <person name="Dhami P."/>
            <person name="Dunn M."/>
            <person name="Dutta I."/>
            <person name="Dyer L.W."/>
            <person name="Earthrowl M.E."/>
            <person name="Faulkner L."/>
            <person name="Fleming C.J."/>
            <person name="Frankish A."/>
            <person name="Frankland J.A."/>
            <person name="French L."/>
            <person name="Fricker D.G."/>
            <person name="Garner P."/>
            <person name="Garnett J."/>
            <person name="Ghori J."/>
            <person name="Gilbert J.G.R."/>
            <person name="Glison C."/>
            <person name="Grafham D.V."/>
            <person name="Gribble S."/>
            <person name="Griffiths C."/>
            <person name="Griffiths-Jones S."/>
            <person name="Grocock R."/>
            <person name="Guy J."/>
            <person name="Hall R.E."/>
            <person name="Hammond S."/>
            <person name="Harley J.L."/>
            <person name="Harrison E.S.I."/>
            <person name="Hart E.A."/>
            <person name="Heath P.D."/>
            <person name="Henderson C.D."/>
            <person name="Hopkins B.L."/>
            <person name="Howard P.J."/>
            <person name="Howden P.J."/>
            <person name="Huckle E."/>
            <person name="Johnson C."/>
            <person name="Johnson D."/>
            <person name="Joy A.A."/>
            <person name="Kay M."/>
            <person name="Keenan S."/>
            <person name="Kershaw J.K."/>
            <person name="Kimberley A.M."/>
            <person name="King A."/>
            <person name="Knights A."/>
            <person name="Laird G.K."/>
            <person name="Langford C."/>
            <person name="Lawlor S."/>
            <person name="Leongamornlert D.A."/>
            <person name="Leversha M."/>
            <person name="Lloyd C."/>
            <person name="Lloyd D.M."/>
            <person name="Lovell J."/>
            <person name="Martin S."/>
            <person name="Mashreghi-Mohammadi M."/>
            <person name="Matthews L."/>
            <person name="McLaren S."/>
            <person name="McLay K.E."/>
            <person name="McMurray A."/>
            <person name="Milne S."/>
            <person name="Nickerson T."/>
            <person name="Nisbett J."/>
            <person name="Nordsiek G."/>
            <person name="Pearce A.V."/>
            <person name="Peck A.I."/>
            <person name="Porter K.M."/>
            <person name="Pandian R."/>
            <person name="Pelan S."/>
            <person name="Phillimore B."/>
            <person name="Povey S."/>
            <person name="Ramsey Y."/>
            <person name="Rand V."/>
            <person name="Scharfe M."/>
            <person name="Sehra H.K."/>
            <person name="Shownkeen R."/>
            <person name="Sims S.K."/>
            <person name="Skuce C.D."/>
            <person name="Smith M."/>
            <person name="Steward C.A."/>
            <person name="Swarbreck D."/>
            <person name="Sycamore N."/>
            <person name="Tester J."/>
            <person name="Thorpe A."/>
            <person name="Tracey A."/>
            <person name="Tromans A."/>
            <person name="Thomas D.W."/>
            <person name="Wall M."/>
            <person name="Wallis J.M."/>
            <person name="West A.P."/>
            <person name="Whitehead S.L."/>
            <person name="Willey D.L."/>
            <person name="Williams S.A."/>
            <person name="Wilming L."/>
            <person name="Wray P.W."/>
            <person name="Young L."/>
            <person name="Ashurst J.L."/>
            <person name="Coulson A."/>
            <person name="Blocker H."/>
            <person name="Durbin R.M."/>
            <person name="Sulston J.E."/>
            <person name="Hubbard T."/>
            <person name="Jackson M.J."/>
            <person name="Bentley D.R."/>
            <person name="Beck S."/>
            <person name="Rogers J."/>
            <person name="Dunham I."/>
        </authorList>
    </citation>
    <scope>NUCLEOTIDE SEQUENCE [LARGE SCALE GENOMIC DNA]</scope>
</reference>
<reference key="3">
    <citation type="journal article" date="2004" name="Genome Res.">
        <title>The status, quality, and expansion of the NIH full-length cDNA project: the Mammalian Gene Collection (MGC).</title>
        <authorList>
            <consortium name="The MGC Project Team"/>
        </authorList>
    </citation>
    <scope>NUCLEOTIDE SEQUENCE [LARGE SCALE MRNA] (ISOFORMS 1 AND 4)</scope>
    <source>
        <tissue>Brain</tissue>
        <tissue>Skin</tissue>
    </source>
</reference>
<reference key="4">
    <citation type="journal article" date="2004" name="Nat. Genet.">
        <title>Complete sequencing and characterization of 21,243 full-length human cDNAs.</title>
        <authorList>
            <person name="Ota T."/>
            <person name="Suzuki Y."/>
            <person name="Nishikawa T."/>
            <person name="Otsuki T."/>
            <person name="Sugiyama T."/>
            <person name="Irie R."/>
            <person name="Wakamatsu A."/>
            <person name="Hayashi K."/>
            <person name="Sato H."/>
            <person name="Nagai K."/>
            <person name="Kimura K."/>
            <person name="Makita H."/>
            <person name="Sekine M."/>
            <person name="Obayashi M."/>
            <person name="Nishi T."/>
            <person name="Shibahara T."/>
            <person name="Tanaka T."/>
            <person name="Ishii S."/>
            <person name="Yamamoto J."/>
            <person name="Saito K."/>
            <person name="Kawai Y."/>
            <person name="Isono Y."/>
            <person name="Nakamura Y."/>
            <person name="Nagahari K."/>
            <person name="Murakami K."/>
            <person name="Yasuda T."/>
            <person name="Iwayanagi T."/>
            <person name="Wagatsuma M."/>
            <person name="Shiratori A."/>
            <person name="Sudo H."/>
            <person name="Hosoiri T."/>
            <person name="Kaku Y."/>
            <person name="Kodaira H."/>
            <person name="Kondo H."/>
            <person name="Sugawara M."/>
            <person name="Takahashi M."/>
            <person name="Kanda K."/>
            <person name="Yokoi T."/>
            <person name="Furuya T."/>
            <person name="Kikkawa E."/>
            <person name="Omura Y."/>
            <person name="Abe K."/>
            <person name="Kamihara K."/>
            <person name="Katsuta N."/>
            <person name="Sato K."/>
            <person name="Tanikawa M."/>
            <person name="Yamazaki M."/>
            <person name="Ninomiya K."/>
            <person name="Ishibashi T."/>
            <person name="Yamashita H."/>
            <person name="Murakawa K."/>
            <person name="Fujimori K."/>
            <person name="Tanai H."/>
            <person name="Kimata M."/>
            <person name="Watanabe M."/>
            <person name="Hiraoka S."/>
            <person name="Chiba Y."/>
            <person name="Ishida S."/>
            <person name="Ono Y."/>
            <person name="Takiguchi S."/>
            <person name="Watanabe S."/>
            <person name="Yosida M."/>
            <person name="Hotuta T."/>
            <person name="Kusano J."/>
            <person name="Kanehori K."/>
            <person name="Takahashi-Fujii A."/>
            <person name="Hara H."/>
            <person name="Tanase T.-O."/>
            <person name="Nomura Y."/>
            <person name="Togiya S."/>
            <person name="Komai F."/>
            <person name="Hara R."/>
            <person name="Takeuchi K."/>
            <person name="Arita M."/>
            <person name="Imose N."/>
            <person name="Musashino K."/>
            <person name="Yuuki H."/>
            <person name="Oshima A."/>
            <person name="Sasaki N."/>
            <person name="Aotsuka S."/>
            <person name="Yoshikawa Y."/>
            <person name="Matsunawa H."/>
            <person name="Ichihara T."/>
            <person name="Shiohata N."/>
            <person name="Sano S."/>
            <person name="Moriya S."/>
            <person name="Momiyama H."/>
            <person name="Satoh N."/>
            <person name="Takami S."/>
            <person name="Terashima Y."/>
            <person name="Suzuki O."/>
            <person name="Nakagawa S."/>
            <person name="Senoh A."/>
            <person name="Mizoguchi H."/>
            <person name="Goto Y."/>
            <person name="Shimizu F."/>
            <person name="Wakebe H."/>
            <person name="Hishigaki H."/>
            <person name="Watanabe T."/>
            <person name="Sugiyama A."/>
            <person name="Takemoto M."/>
            <person name="Kawakami B."/>
            <person name="Yamazaki M."/>
            <person name="Watanabe K."/>
            <person name="Kumagai A."/>
            <person name="Itakura S."/>
            <person name="Fukuzumi Y."/>
            <person name="Fujimori Y."/>
            <person name="Komiyama M."/>
            <person name="Tashiro H."/>
            <person name="Tanigami A."/>
            <person name="Fujiwara T."/>
            <person name="Ono T."/>
            <person name="Yamada K."/>
            <person name="Fujii Y."/>
            <person name="Ozaki K."/>
            <person name="Hirao M."/>
            <person name="Ohmori Y."/>
            <person name="Kawabata A."/>
            <person name="Hikiji T."/>
            <person name="Kobatake N."/>
            <person name="Inagaki H."/>
            <person name="Ikema Y."/>
            <person name="Okamoto S."/>
            <person name="Okitani R."/>
            <person name="Kawakami T."/>
            <person name="Noguchi S."/>
            <person name="Itoh T."/>
            <person name="Shigeta K."/>
            <person name="Senba T."/>
            <person name="Matsumura K."/>
            <person name="Nakajima Y."/>
            <person name="Mizuno T."/>
            <person name="Morinaga M."/>
            <person name="Sasaki M."/>
            <person name="Togashi T."/>
            <person name="Oyama M."/>
            <person name="Hata H."/>
            <person name="Watanabe M."/>
            <person name="Komatsu T."/>
            <person name="Mizushima-Sugano J."/>
            <person name="Satoh T."/>
            <person name="Shirai Y."/>
            <person name="Takahashi Y."/>
            <person name="Nakagawa K."/>
            <person name="Okumura K."/>
            <person name="Nagase T."/>
            <person name="Nomura N."/>
            <person name="Kikuchi H."/>
            <person name="Masuho Y."/>
            <person name="Yamashita R."/>
            <person name="Nakai K."/>
            <person name="Yada T."/>
            <person name="Nakamura Y."/>
            <person name="Ohara O."/>
            <person name="Isogai T."/>
            <person name="Sugano S."/>
        </authorList>
    </citation>
    <scope>NUCLEOTIDE SEQUENCE [LARGE SCALE MRNA] OF 644-1146 (ISOFORM 1)</scope>
</reference>
<reference key="5">
    <citation type="journal article" date="2002" name="Mol. Biol. Cell">
        <title>Functional proteomic analysis of human nucleolus.</title>
        <authorList>
            <person name="Scherl A."/>
            <person name="Coute Y."/>
            <person name="Deon C."/>
            <person name="Calle A."/>
            <person name="Kindbeiter K."/>
            <person name="Sanchez J.-C."/>
            <person name="Greco A."/>
            <person name="Hochstrasser D.F."/>
            <person name="Diaz J.-J."/>
        </authorList>
    </citation>
    <scope>SUBCELLULAR LOCATION [LARGE SCALE ANALYSIS]</scope>
    <source>
        <tissue>Cervix carcinoma</tissue>
    </source>
</reference>
<reference key="6">
    <citation type="journal article" date="2008" name="Proc. Natl. Acad. Sci. U.S.A.">
        <title>A quantitative atlas of mitotic phosphorylation.</title>
        <authorList>
            <person name="Dephoure N."/>
            <person name="Zhou C."/>
            <person name="Villen J."/>
            <person name="Beausoleil S.A."/>
            <person name="Bakalarski C.E."/>
            <person name="Elledge S.J."/>
            <person name="Gygi S.P."/>
        </authorList>
    </citation>
    <scope>PHOSPHORYLATION [LARGE SCALE ANALYSIS] AT SER-811</scope>
    <scope>IDENTIFICATION BY MASS SPECTROMETRY [LARGE SCALE ANALYSIS]</scope>
    <source>
        <tissue>Cervix carcinoma</tissue>
    </source>
</reference>
<reference key="7">
    <citation type="journal article" date="2010" name="Sci. Signal.">
        <title>Quantitative phosphoproteomics reveals widespread full phosphorylation site occupancy during mitosis.</title>
        <authorList>
            <person name="Olsen J.V."/>
            <person name="Vermeulen M."/>
            <person name="Santamaria A."/>
            <person name="Kumar C."/>
            <person name="Miller M.L."/>
            <person name="Jensen L.J."/>
            <person name="Gnad F."/>
            <person name="Cox J."/>
            <person name="Jensen T.S."/>
            <person name="Nigg E.A."/>
            <person name="Brunak S."/>
            <person name="Mann M."/>
        </authorList>
    </citation>
    <scope>PHOSPHORYLATION [LARGE SCALE ANALYSIS] AT SER-811</scope>
    <scope>IDENTIFICATION BY MASS SPECTROMETRY [LARGE SCALE ANALYSIS]</scope>
    <source>
        <tissue>Cervix carcinoma</tissue>
    </source>
</reference>
<reference key="8">
    <citation type="journal article" date="2011" name="Sci. Signal.">
        <title>System-wide temporal characterization of the proteome and phosphoproteome of human embryonic stem cell differentiation.</title>
        <authorList>
            <person name="Rigbolt K.T."/>
            <person name="Prokhorova T.A."/>
            <person name="Akimov V."/>
            <person name="Henningsen J."/>
            <person name="Johansen P.T."/>
            <person name="Kratchmarova I."/>
            <person name="Kassem M."/>
            <person name="Mann M."/>
            <person name="Olsen J.V."/>
            <person name="Blagoev B."/>
        </authorList>
    </citation>
    <scope>PHOSPHORYLATION [LARGE SCALE ANALYSIS] AT SER-811</scope>
    <scope>IDENTIFICATION BY MASS SPECTROMETRY [LARGE SCALE ANALYSIS]</scope>
</reference>
<reference key="9">
    <citation type="journal article" date="2013" name="J. Proteome Res.">
        <title>Toward a comprehensive characterization of a human cancer cell phosphoproteome.</title>
        <authorList>
            <person name="Zhou H."/>
            <person name="Di Palma S."/>
            <person name="Preisinger C."/>
            <person name="Peng M."/>
            <person name="Polat A.N."/>
            <person name="Heck A.J."/>
            <person name="Mohammed S."/>
        </authorList>
    </citation>
    <scope>PHOSPHORYLATION [LARGE SCALE ANALYSIS] AT SER-56; SER-283; SER-289 AND SER-811</scope>
    <scope>IDENTIFICATION BY MASS SPECTROMETRY [LARGE SCALE ANALYSIS]</scope>
    <source>
        <tissue>Cervix carcinoma</tissue>
        <tissue>Erythroleukemia</tissue>
    </source>
</reference>
<reference key="10">
    <citation type="journal article" date="2020" name="Nat. Commun.">
        <title>RRP7A links primary microcephaly to dysfunction of ribosome biogenesis, resorption of primary cilia, and neurogenesis.</title>
        <authorList>
            <person name="Farooq M."/>
            <person name="Lindbaek L."/>
            <person name="Krogh N."/>
            <person name="Doganli C."/>
            <person name="Keller C."/>
            <person name="Moennich M."/>
            <person name="Goncalves A.B."/>
            <person name="Sakthivel S."/>
            <person name="Mang Y."/>
            <person name="Fatima A."/>
            <person name="Andersen V.S."/>
            <person name="Hussain M.S."/>
            <person name="Eiberg H."/>
            <person name="Hansen L."/>
            <person name="Kjaer K.W."/>
            <person name="Gopalakrishnan J."/>
            <person name="Pedersen L.B."/>
            <person name="Moellgaard K."/>
            <person name="Nielsen H."/>
            <person name="Baig S.M."/>
            <person name="Tommerup N."/>
            <person name="Christensen S.T."/>
            <person name="Larsen L.A."/>
        </authorList>
    </citation>
    <scope>INTERACTION WITH RRP7A</scope>
</reference>
<reference evidence="12 13 14" key="11">
    <citation type="journal article" date="2021" name="Science">
        <title>Nucleolar maturation of the human small subunit processome.</title>
        <authorList>
            <person name="Singh S."/>
            <person name="Vanden Broeck A."/>
            <person name="Miller L."/>
            <person name="Chaker-Margot M."/>
            <person name="Klinge S."/>
        </authorList>
    </citation>
    <scope>STRUCTURE BY ELECTRON MICROSCOPY (2.70 ANGSTROMS)</scope>
    <scope>FUNCTION</scope>
    <scope>SUBUNIT</scope>
    <scope>SUBCELLULAR LOCATION</scope>
</reference>
<organism>
    <name type="scientific">Homo sapiens</name>
    <name type="common">Human</name>
    <dbReference type="NCBI Taxonomy" id="9606"/>
    <lineage>
        <taxon>Eukaryota</taxon>
        <taxon>Metazoa</taxon>
        <taxon>Chordata</taxon>
        <taxon>Craniata</taxon>
        <taxon>Vertebrata</taxon>
        <taxon>Euteleostomi</taxon>
        <taxon>Mammalia</taxon>
        <taxon>Eutheria</taxon>
        <taxon>Euarchontoglires</taxon>
        <taxon>Primates</taxon>
        <taxon>Haplorrhini</taxon>
        <taxon>Catarrhini</taxon>
        <taxon>Hominidae</taxon>
        <taxon>Homo</taxon>
    </lineage>
</organism>
<comment type="function">
    <text evidence="4 7">Part of the small subunit (SSU) processome, first precursor of the small eukaryotic ribosomal subunit. During the assembly of the SSU processome in the nucleolus, many ribosome biogenesis factors, an RNA chaperone and ribosomal proteins associate with the nascent pre-rRNA and work in concert to generate RNA folding, modifications, rearrangements and cleavage as well as targeted degradation of pre-ribosomal RNA by the RNA exosome.</text>
</comment>
<comment type="subunit">
    <text evidence="6 7">Part of the small subunit (SSU) processome, composed of more than 70 proteins and the RNA chaperone small nucleolar RNA (snoRNA) U3 (PubMed:34516797). Interacts with RRP7A; required for NOL6 localization to nucleolus (PubMed:33199730).</text>
</comment>
<comment type="interaction">
    <interactant intactId="EBI-2514288">
        <id>Q9H6R4</id>
    </interactant>
    <interactant intactId="EBI-1055254">
        <id>Q8WXH2</id>
        <label>JPH3</label>
    </interactant>
    <organismsDiffer>false</organismsDiffer>
    <experiments>3</experiments>
</comment>
<comment type="interaction">
    <interactant intactId="EBI-10307896">
        <id>Q9H6R4-4</id>
    </interactant>
    <interactant intactId="EBI-747107">
        <id>Q8IUQ4</id>
        <label>SIAH1</label>
    </interactant>
    <organismsDiffer>false</organismsDiffer>
    <experiments>3</experiments>
</comment>
<comment type="subcellular location">
    <subcellularLocation>
        <location evidence="5 7">Nucleus</location>
        <location evidence="5 7">Nucleolus</location>
    </subcellularLocation>
    <subcellularLocation>
        <location evidence="1">Chromosome</location>
    </subcellularLocation>
    <text evidence="1">Localizes to condensed chromosomes in mitosis.</text>
</comment>
<comment type="alternative products">
    <event type="alternative splicing"/>
    <isoform>
        <id>Q9H6R4-1</id>
        <name>1</name>
        <name>Alpha</name>
        <name>Long</name>
        <sequence type="displayed"/>
    </isoform>
    <isoform>
        <id>Q9H6R4-2</id>
        <name>2</name>
        <name>Beta</name>
        <name>Mid</name>
        <sequence type="described" ref="VSP_013532"/>
    </isoform>
    <isoform>
        <id>Q9H6R4-3</id>
        <name>3</name>
        <name>Gamma</name>
        <name>Short</name>
        <sequence type="described" ref="VSP_013531"/>
    </isoform>
    <isoform>
        <id>Q9H6R4-4</id>
        <name>4</name>
        <sequence type="described" ref="VSP_013530"/>
    </isoform>
</comment>
<comment type="similarity">
    <text evidence="10">Belongs to the NRAP family.</text>
</comment>
<comment type="sequence caution" evidence="10">
    <conflict type="erroneous initiation">
        <sequence resource="EMBL-CDS" id="AAH08298"/>
    </conflict>
</comment>
<comment type="sequence caution" evidence="10">
    <conflict type="erroneous initiation">
        <sequence resource="EMBL-CDS" id="BAB15189"/>
    </conflict>
</comment>
<comment type="sequence caution" evidence="10">
    <conflict type="miscellaneous discrepancy">
        <sequence resource="EMBL-CDS" id="BAB15389"/>
    </conflict>
    <text>Intron retention.</text>
</comment>
<sequence>MGPAPAGEQLRGATGEPEVMEPALEGTGKEGKKASSRKRTLAEPPAKGLLQPVKLSRAELYKEPTNEELNRLRETEILFHSSLLRLQVEELLKEVRLSEKKKDRIDAFLREVNQRVVRVPSVPETELTDQAWLPAGVRVPLHQVPYAVKGCFRFLPPAQVTVVGSYLLGTCIRPDINVDVALTMPREILQDKDGLNQRYFRKRALYLAHLAHHLAQDPLFGSVCFSYTNGCHLKPSLLLRPRGKDERLVTVRLHPCPPPDFFRPCRLLPTKNNVRSAWYRGQSPAGDGSPEPPTPRYNTWVLQDTVLESHLQLLSTILSSAQGLKDGVALLKVWLRQRELDKGQGGFTGFLVSMLVVFLVSTRKIHTTMSGYQVLRSVLQFLATTDLTVNGISLCLSSDPSLPALADFHQAFSVVFLDSSGHLNLCADVTASTYHQVQHEARLSMMLLDSRADDGFHLLLMTPKPMIRAFDHVLHLRPLSRLQAACHRLKLWPELQDNGGDYVSAALGPLTTLLEQGLGARLNLLAHSRPPVPEWDISQDPPKHKDSGTLTLGLLLRPEGLTSVLELGPEADQPEAAKFRQFWGSRSELRRFQDGAIREAVVWEAASMSQKRLIPHQVVTHLLALHADIPETCVHYVGGPLDALIQGLKETSSTGEEALVAAVRCYDDLSRLLWGLEGLPLTVSAVQGAHPVLRYTEVFPPTPVRPAFSFYETLRERSSLLPRLDKPCPAYVEPMTVVCHLEGSGQWPQDAEAVQRVRAAFQLRLAELLTQQHGLQCRATATHTDVLKDGFVFRIRVAYQREPQILKEVQSPEGMISLRDTAASLRLERDTRQLPLLTSALHGLQQQHPAFSGVARLAKRWVRAQLLGEGFADESLDLVAAALFLHPEPFTPPSSPQVGFLRFLFLVSTFDWKNNPLFVNLNNELTVEEQVEIRSGFLAARAQLPVMVIVTPQDRKNSVWTQDGPSAQILQQLVVLAAEALPMLEKQLMDPRGPGDIRTVFRPPLDIYDVLIRLSPRHIPRHRQAVDSPAASFCRGLLSQPGPSSLMPVLGYDPPQLYLTQLREAFGDLALFFYDQHGGEVIGVLWKPTSFQPQPFKASSTKGRMVMSRGGELVMVPNVEAILEDFAVLGEGLVQTVEARSERWTV</sequence>
<accession>Q9H6R4</accession>
<accession>Q5T5M3</accession>
<accession>Q5T5M4</accession>
<accession>Q7L4G6</accession>
<accession>Q8N6I0</accession>
<accession>Q8TEY9</accession>
<accession>Q8TEZ0</accession>
<accession>Q8TEZ1</accession>
<accession>Q9H675</accession>